<reference key="1">
    <citation type="submission" date="2007-06" db="EMBL/GenBank/DDBJ databases">
        <authorList>
            <person name="Brinkac L.M."/>
            <person name="Daugherty S."/>
            <person name="Dodson R.J."/>
            <person name="Madupu R."/>
            <person name="Brown J.L."/>
            <person name="Bruce D."/>
            <person name="Detter C."/>
            <person name="Munk C."/>
            <person name="Smith L.A."/>
            <person name="Smith T.J."/>
            <person name="White O."/>
            <person name="Brettin T.S."/>
        </authorList>
    </citation>
    <scope>NUCLEOTIDE SEQUENCE [LARGE SCALE GENOMIC DNA]</scope>
    <source>
        <strain>Langeland / NCTC 10281 / Type F</strain>
    </source>
</reference>
<organism>
    <name type="scientific">Clostridium botulinum (strain Langeland / NCTC 10281 / Type F)</name>
    <dbReference type="NCBI Taxonomy" id="441772"/>
    <lineage>
        <taxon>Bacteria</taxon>
        <taxon>Bacillati</taxon>
        <taxon>Bacillota</taxon>
        <taxon>Clostridia</taxon>
        <taxon>Eubacteriales</taxon>
        <taxon>Clostridiaceae</taxon>
        <taxon>Clostridium</taxon>
    </lineage>
</organism>
<sequence>MARVKRAMNARKRHKKVLKLAKGYYGGKSKLFKTANESVIRALRNAYVGRKLKKRDYRKLWIARINAATRMNGLSYSKFMNGIKNAGIDINRKMLSEIAINDPKAFAELVDVAKKQLNA</sequence>
<proteinExistence type="inferred from homology"/>
<dbReference type="EMBL" id="CP000728">
    <property type="protein sequence ID" value="ABS40756.1"/>
    <property type="molecule type" value="Genomic_DNA"/>
</dbReference>
<dbReference type="RefSeq" id="WP_003386545.1">
    <property type="nucleotide sequence ID" value="NC_009699.1"/>
</dbReference>
<dbReference type="SMR" id="A7GI02"/>
<dbReference type="GeneID" id="92939856"/>
<dbReference type="KEGG" id="cbf:CLI_3193"/>
<dbReference type="HOGENOM" id="CLU_123265_0_1_9"/>
<dbReference type="Proteomes" id="UP000002410">
    <property type="component" value="Chromosome"/>
</dbReference>
<dbReference type="GO" id="GO:1990904">
    <property type="term" value="C:ribonucleoprotein complex"/>
    <property type="evidence" value="ECO:0007669"/>
    <property type="project" value="UniProtKB-KW"/>
</dbReference>
<dbReference type="GO" id="GO:0005840">
    <property type="term" value="C:ribosome"/>
    <property type="evidence" value="ECO:0007669"/>
    <property type="project" value="UniProtKB-KW"/>
</dbReference>
<dbReference type="GO" id="GO:0019843">
    <property type="term" value="F:rRNA binding"/>
    <property type="evidence" value="ECO:0007669"/>
    <property type="project" value="UniProtKB-UniRule"/>
</dbReference>
<dbReference type="GO" id="GO:0003735">
    <property type="term" value="F:structural constituent of ribosome"/>
    <property type="evidence" value="ECO:0007669"/>
    <property type="project" value="InterPro"/>
</dbReference>
<dbReference type="GO" id="GO:0000027">
    <property type="term" value="P:ribosomal large subunit assembly"/>
    <property type="evidence" value="ECO:0007669"/>
    <property type="project" value="UniProtKB-UniRule"/>
</dbReference>
<dbReference type="GO" id="GO:0006412">
    <property type="term" value="P:translation"/>
    <property type="evidence" value="ECO:0007669"/>
    <property type="project" value="InterPro"/>
</dbReference>
<dbReference type="CDD" id="cd07026">
    <property type="entry name" value="Ribosomal_L20"/>
    <property type="match status" value="1"/>
</dbReference>
<dbReference type="FunFam" id="1.10.1900.20:FF:000001">
    <property type="entry name" value="50S ribosomal protein L20"/>
    <property type="match status" value="1"/>
</dbReference>
<dbReference type="Gene3D" id="6.10.160.10">
    <property type="match status" value="1"/>
</dbReference>
<dbReference type="Gene3D" id="1.10.1900.20">
    <property type="entry name" value="Ribosomal protein L20"/>
    <property type="match status" value="1"/>
</dbReference>
<dbReference type="HAMAP" id="MF_00382">
    <property type="entry name" value="Ribosomal_bL20"/>
    <property type="match status" value="1"/>
</dbReference>
<dbReference type="InterPro" id="IPR005813">
    <property type="entry name" value="Ribosomal_bL20"/>
</dbReference>
<dbReference type="InterPro" id="IPR049946">
    <property type="entry name" value="RIBOSOMAL_L20_CS"/>
</dbReference>
<dbReference type="InterPro" id="IPR035566">
    <property type="entry name" value="Ribosomal_protein_bL20_C"/>
</dbReference>
<dbReference type="NCBIfam" id="TIGR01032">
    <property type="entry name" value="rplT_bact"/>
    <property type="match status" value="1"/>
</dbReference>
<dbReference type="PANTHER" id="PTHR10986">
    <property type="entry name" value="39S RIBOSOMAL PROTEIN L20"/>
    <property type="match status" value="1"/>
</dbReference>
<dbReference type="Pfam" id="PF00453">
    <property type="entry name" value="Ribosomal_L20"/>
    <property type="match status" value="1"/>
</dbReference>
<dbReference type="PRINTS" id="PR00062">
    <property type="entry name" value="RIBOSOMALL20"/>
</dbReference>
<dbReference type="SUPFAM" id="SSF74731">
    <property type="entry name" value="Ribosomal protein L20"/>
    <property type="match status" value="1"/>
</dbReference>
<dbReference type="PROSITE" id="PS00937">
    <property type="entry name" value="RIBOSOMAL_L20"/>
    <property type="match status" value="1"/>
</dbReference>
<protein>
    <recommendedName>
        <fullName evidence="1">Large ribosomal subunit protein bL20</fullName>
    </recommendedName>
    <alternativeName>
        <fullName evidence="2">50S ribosomal protein L20</fullName>
    </alternativeName>
</protein>
<feature type="chain" id="PRO_1000048959" description="Large ribosomal subunit protein bL20">
    <location>
        <begin position="1"/>
        <end position="119"/>
    </location>
</feature>
<comment type="function">
    <text evidence="1">Binds directly to 23S ribosomal RNA and is necessary for the in vitro assembly process of the 50S ribosomal subunit. It is not involved in the protein synthesizing functions of that subunit.</text>
</comment>
<comment type="similarity">
    <text evidence="1">Belongs to the bacterial ribosomal protein bL20 family.</text>
</comment>
<accession>A7GI02</accession>
<evidence type="ECO:0000255" key="1">
    <source>
        <dbReference type="HAMAP-Rule" id="MF_00382"/>
    </source>
</evidence>
<evidence type="ECO:0000305" key="2"/>
<gene>
    <name evidence="1" type="primary">rplT</name>
    <name type="ordered locus">CLI_3193</name>
</gene>
<keyword id="KW-0687">Ribonucleoprotein</keyword>
<keyword id="KW-0689">Ribosomal protein</keyword>
<keyword id="KW-0694">RNA-binding</keyword>
<keyword id="KW-0699">rRNA-binding</keyword>
<name>RL20_CLOBL</name>